<protein>
    <recommendedName>
        <fullName>Ras-related protein Rab-18</fullName>
        <ecNumber evidence="4">3.6.5.2</ecNumber>
    </recommendedName>
</protein>
<proteinExistence type="evidence at transcript level"/>
<dbReference type="EC" id="3.6.5.2" evidence="4"/>
<dbReference type="EMBL" id="CR860884">
    <property type="protein sequence ID" value="CAH92991.1"/>
    <property type="molecule type" value="mRNA"/>
</dbReference>
<dbReference type="RefSeq" id="NP_001127616.1">
    <property type="nucleotide sequence ID" value="NM_001134144.1"/>
</dbReference>
<dbReference type="SMR" id="Q5R5H5"/>
<dbReference type="FunCoup" id="Q5R5H5">
    <property type="interactions" value="3752"/>
</dbReference>
<dbReference type="STRING" id="9601.ENSPPYP00000002529"/>
<dbReference type="Ensembl" id="ENSPPYT00000002604.3">
    <property type="protein sequence ID" value="ENSPPYP00000002529.2"/>
    <property type="gene ID" value="ENSPPYG00000002172.3"/>
</dbReference>
<dbReference type="GeneID" id="100174695"/>
<dbReference type="KEGG" id="pon:100174695"/>
<dbReference type="CTD" id="22931"/>
<dbReference type="eggNOG" id="KOG0080">
    <property type="taxonomic scope" value="Eukaryota"/>
</dbReference>
<dbReference type="GeneTree" id="ENSGT00940000157325"/>
<dbReference type="HOGENOM" id="CLU_041217_10_7_1"/>
<dbReference type="InParanoid" id="Q5R5H5"/>
<dbReference type="OrthoDB" id="9989112at2759"/>
<dbReference type="TreeFam" id="TF313448"/>
<dbReference type="Proteomes" id="UP000001595">
    <property type="component" value="Chromosome 10"/>
</dbReference>
<dbReference type="GO" id="GO:0016324">
    <property type="term" value="C:apical plasma membrane"/>
    <property type="evidence" value="ECO:0007669"/>
    <property type="project" value="UniProtKB-SubCell"/>
</dbReference>
<dbReference type="GO" id="GO:0033106">
    <property type="term" value="C:cis-Golgi network membrane"/>
    <property type="evidence" value="ECO:0000250"/>
    <property type="project" value="UniProtKB"/>
</dbReference>
<dbReference type="GO" id="GO:0005789">
    <property type="term" value="C:endoplasmic reticulum membrane"/>
    <property type="evidence" value="ECO:0000250"/>
    <property type="project" value="UniProtKB"/>
</dbReference>
<dbReference type="GO" id="GO:0005811">
    <property type="term" value="C:lipid droplet"/>
    <property type="evidence" value="ECO:0000250"/>
    <property type="project" value="UniProtKB"/>
</dbReference>
<dbReference type="GO" id="GO:0019003">
    <property type="term" value="F:GDP binding"/>
    <property type="evidence" value="ECO:0000250"/>
    <property type="project" value="UniProtKB"/>
</dbReference>
<dbReference type="GO" id="GO:0005525">
    <property type="term" value="F:GTP binding"/>
    <property type="evidence" value="ECO:0007669"/>
    <property type="project" value="UniProtKB-KW"/>
</dbReference>
<dbReference type="GO" id="GO:0003924">
    <property type="term" value="F:GTPase activity"/>
    <property type="evidence" value="ECO:0000250"/>
    <property type="project" value="UniProtKB"/>
</dbReference>
<dbReference type="GO" id="GO:0007420">
    <property type="term" value="P:brain development"/>
    <property type="evidence" value="ECO:0000250"/>
    <property type="project" value="UniProtKB"/>
</dbReference>
<dbReference type="GO" id="GO:0001654">
    <property type="term" value="P:eye development"/>
    <property type="evidence" value="ECO:0000250"/>
    <property type="project" value="UniProtKB"/>
</dbReference>
<dbReference type="GO" id="GO:0015031">
    <property type="term" value="P:protein transport"/>
    <property type="evidence" value="ECO:0007669"/>
    <property type="project" value="UniProtKB-KW"/>
</dbReference>
<dbReference type="CDD" id="cd01863">
    <property type="entry name" value="Rab18"/>
    <property type="match status" value="1"/>
</dbReference>
<dbReference type="FunFam" id="3.40.50.300:FF:000430">
    <property type="entry name" value="Probable Ras-related protein Rab-18"/>
    <property type="match status" value="1"/>
</dbReference>
<dbReference type="Gene3D" id="3.40.50.300">
    <property type="entry name" value="P-loop containing nucleotide triphosphate hydrolases"/>
    <property type="match status" value="1"/>
</dbReference>
<dbReference type="InterPro" id="IPR027417">
    <property type="entry name" value="P-loop_NTPase"/>
</dbReference>
<dbReference type="InterPro" id="IPR050227">
    <property type="entry name" value="Rab"/>
</dbReference>
<dbReference type="InterPro" id="IPR025662">
    <property type="entry name" value="Sigma_54_int_dom_ATP-bd_1"/>
</dbReference>
<dbReference type="InterPro" id="IPR005225">
    <property type="entry name" value="Small_GTP-bd"/>
</dbReference>
<dbReference type="InterPro" id="IPR001806">
    <property type="entry name" value="Small_GTPase"/>
</dbReference>
<dbReference type="NCBIfam" id="TIGR00231">
    <property type="entry name" value="small_GTP"/>
    <property type="match status" value="1"/>
</dbReference>
<dbReference type="PANTHER" id="PTHR47977">
    <property type="entry name" value="RAS-RELATED PROTEIN RAB"/>
    <property type="match status" value="1"/>
</dbReference>
<dbReference type="Pfam" id="PF00071">
    <property type="entry name" value="Ras"/>
    <property type="match status" value="1"/>
</dbReference>
<dbReference type="PRINTS" id="PR00449">
    <property type="entry name" value="RASTRNSFRMNG"/>
</dbReference>
<dbReference type="SMART" id="SM00177">
    <property type="entry name" value="ARF"/>
    <property type="match status" value="1"/>
</dbReference>
<dbReference type="SMART" id="SM00175">
    <property type="entry name" value="RAB"/>
    <property type="match status" value="1"/>
</dbReference>
<dbReference type="SMART" id="SM00176">
    <property type="entry name" value="RAN"/>
    <property type="match status" value="1"/>
</dbReference>
<dbReference type="SMART" id="SM00173">
    <property type="entry name" value="RAS"/>
    <property type="match status" value="1"/>
</dbReference>
<dbReference type="SMART" id="SM00174">
    <property type="entry name" value="RHO"/>
    <property type="match status" value="1"/>
</dbReference>
<dbReference type="SUPFAM" id="SSF52540">
    <property type="entry name" value="P-loop containing nucleoside triphosphate hydrolases"/>
    <property type="match status" value="1"/>
</dbReference>
<dbReference type="PROSITE" id="PS51419">
    <property type="entry name" value="RAB"/>
    <property type="match status" value="1"/>
</dbReference>
<gene>
    <name type="primary">RAB18</name>
</gene>
<accession>Q5R5H5</accession>
<feature type="chain" id="PRO_0000121195" description="Ras-related protein Rab-18">
    <location>
        <begin position="1"/>
        <end position="203"/>
    </location>
</feature>
<feature type="propeptide" id="PRO_0000370763" description="Removed in mature form" evidence="5">
    <location>
        <begin position="204"/>
        <end position="206"/>
    </location>
</feature>
<feature type="short sequence motif" description="Switch 1" evidence="3">
    <location>
        <begin position="31"/>
        <end position="45"/>
    </location>
</feature>
<feature type="short sequence motif" description="Switch 2" evidence="3">
    <location>
        <begin position="63"/>
        <end position="80"/>
    </location>
</feature>
<feature type="binding site" evidence="4">
    <location>
        <position position="17"/>
    </location>
    <ligand>
        <name>GTP</name>
        <dbReference type="ChEBI" id="CHEBI:37565"/>
    </ligand>
</feature>
<feature type="binding site" evidence="4">
    <location>
        <position position="20"/>
    </location>
    <ligand>
        <name>GTP</name>
        <dbReference type="ChEBI" id="CHEBI:37565"/>
    </ligand>
</feature>
<feature type="binding site" evidence="4">
    <location>
        <position position="21"/>
    </location>
    <ligand>
        <name>GTP</name>
        <dbReference type="ChEBI" id="CHEBI:37565"/>
    </ligand>
</feature>
<feature type="binding site" evidence="4">
    <location>
        <position position="22"/>
    </location>
    <ligand>
        <name>GTP</name>
        <dbReference type="ChEBI" id="CHEBI:37565"/>
    </ligand>
</feature>
<feature type="binding site" evidence="4">
    <location>
        <position position="22"/>
    </location>
    <ligand>
        <name>Mg(2+)</name>
        <dbReference type="ChEBI" id="CHEBI:18420"/>
    </ligand>
</feature>
<feature type="binding site" evidence="4">
    <location>
        <position position="23"/>
    </location>
    <ligand>
        <name>GTP</name>
        <dbReference type="ChEBI" id="CHEBI:37565"/>
    </ligand>
</feature>
<feature type="binding site" evidence="4">
    <location>
        <position position="34"/>
    </location>
    <ligand>
        <name>GTP</name>
        <dbReference type="ChEBI" id="CHEBI:37565"/>
    </ligand>
</feature>
<feature type="binding site" evidence="4">
    <location>
        <position position="35"/>
    </location>
    <ligand>
        <name>GTP</name>
        <dbReference type="ChEBI" id="CHEBI:37565"/>
    </ligand>
</feature>
<feature type="binding site" evidence="4">
    <location>
        <position position="40"/>
    </location>
    <ligand>
        <name>GTP</name>
        <dbReference type="ChEBI" id="CHEBI:37565"/>
    </ligand>
</feature>
<feature type="binding site" evidence="4">
    <location>
        <position position="40"/>
    </location>
    <ligand>
        <name>Mg(2+)</name>
        <dbReference type="ChEBI" id="CHEBI:18420"/>
    </ligand>
</feature>
<feature type="binding site" evidence="4">
    <location>
        <position position="66"/>
    </location>
    <ligand>
        <name>GTP</name>
        <dbReference type="ChEBI" id="CHEBI:37565"/>
    </ligand>
</feature>
<feature type="binding site" evidence="4">
    <location>
        <position position="123"/>
    </location>
    <ligand>
        <name>GTP</name>
        <dbReference type="ChEBI" id="CHEBI:37565"/>
    </ligand>
</feature>
<feature type="binding site" evidence="4">
    <location>
        <position position="125"/>
    </location>
    <ligand>
        <name>GTP</name>
        <dbReference type="ChEBI" id="CHEBI:37565"/>
    </ligand>
</feature>
<feature type="binding site" evidence="4">
    <location>
        <position position="152"/>
    </location>
    <ligand>
        <name>GTP</name>
        <dbReference type="ChEBI" id="CHEBI:37565"/>
    </ligand>
</feature>
<feature type="modified residue" description="N-acetylmethionine" evidence="4">
    <location>
        <position position="1"/>
    </location>
</feature>
<feature type="modified residue" description="Phosphoserine" evidence="2">
    <location>
        <position position="144"/>
    </location>
</feature>
<feature type="modified residue" description="Cysteine methyl ester" evidence="5">
    <location>
        <position position="203"/>
    </location>
</feature>
<feature type="lipid moiety-binding region" description="S-palmitoyl cysteine" evidence="5">
    <location>
        <position position="199"/>
    </location>
</feature>
<feature type="lipid moiety-binding region" description="S-geranylgeranyl cysteine" evidence="1">
    <location>
        <position position="203"/>
    </location>
</feature>
<sequence>MDEDVLTTLKILIIGESGVGKSSLLLRFTDDTFDPELAATIGVDFKVKTISVDGNKAKLAIWDTAGQERFRTLTPSYYRGAQGVILVYDVTRRDTFVKLDNWLNELETYCTRNDIVNMLVGNKIDKENREVDRNEGLKFARKHSMLFIEASAKTCDGVQCAFEELVEKIIQTPGLWESENQNKGVKLSHREEGQGGGACGGYCSVL</sequence>
<keyword id="KW-0007">Acetylation</keyword>
<keyword id="KW-1003">Cell membrane</keyword>
<keyword id="KW-0217">Developmental protein</keyword>
<keyword id="KW-0256">Endoplasmic reticulum</keyword>
<keyword id="KW-0333">Golgi apparatus</keyword>
<keyword id="KW-0342">GTP-binding</keyword>
<keyword id="KW-0378">Hydrolase</keyword>
<keyword id="KW-0551">Lipid droplet</keyword>
<keyword id="KW-0449">Lipoprotein</keyword>
<keyword id="KW-0460">Magnesium</keyword>
<keyword id="KW-0472">Membrane</keyword>
<keyword id="KW-0479">Metal-binding</keyword>
<keyword id="KW-0488">Methylation</keyword>
<keyword id="KW-0547">Nucleotide-binding</keyword>
<keyword id="KW-0564">Palmitate</keyword>
<keyword id="KW-0597">Phosphoprotein</keyword>
<keyword id="KW-0636">Prenylation</keyword>
<keyword id="KW-0653">Protein transport</keyword>
<keyword id="KW-1185">Reference proteome</keyword>
<keyword id="KW-0813">Transport</keyword>
<name>RAB18_PONAB</name>
<organism>
    <name type="scientific">Pongo abelii</name>
    <name type="common">Sumatran orangutan</name>
    <name type="synonym">Pongo pygmaeus abelii</name>
    <dbReference type="NCBI Taxonomy" id="9601"/>
    <lineage>
        <taxon>Eukaryota</taxon>
        <taxon>Metazoa</taxon>
        <taxon>Chordata</taxon>
        <taxon>Craniata</taxon>
        <taxon>Vertebrata</taxon>
        <taxon>Euteleostomi</taxon>
        <taxon>Mammalia</taxon>
        <taxon>Eutheria</taxon>
        <taxon>Euarchontoglires</taxon>
        <taxon>Primates</taxon>
        <taxon>Haplorrhini</taxon>
        <taxon>Catarrhini</taxon>
        <taxon>Hominidae</taxon>
        <taxon>Pongo</taxon>
    </lineage>
</organism>
<evidence type="ECO:0000250" key="1"/>
<evidence type="ECO:0000250" key="2">
    <source>
        <dbReference type="UniProtKB" id="P35293"/>
    </source>
</evidence>
<evidence type="ECO:0000250" key="3">
    <source>
        <dbReference type="UniProtKB" id="P62820"/>
    </source>
</evidence>
<evidence type="ECO:0000250" key="4">
    <source>
        <dbReference type="UniProtKB" id="Q9NP72"/>
    </source>
</evidence>
<evidence type="ECO:0000255" key="5"/>
<evidence type="ECO:0000305" key="6"/>
<reference key="1">
    <citation type="submission" date="2004-11" db="EMBL/GenBank/DDBJ databases">
        <authorList>
            <consortium name="The German cDNA consortium"/>
        </authorList>
    </citation>
    <scope>NUCLEOTIDE SEQUENCE [LARGE SCALE MRNA]</scope>
    <source>
        <tissue>Kidney</tissue>
    </source>
</reference>
<comment type="function">
    <text evidence="2 4">The small GTPases Rab are key regulators of intracellular membrane trafficking, from the formation of transport vesicles to their fusion with membranes (By similarity). Rabs cycle between an inactive GDP-bound form and an active GTP-bound form that is able to recruit to membranes different sets of downstream effectors directly responsible for vesicle formation, movement, tethering and fusion (By similarity). RAB18 is required for the localization of ZFYVE1 to lipid droplets and for its function in mediating the formation of endoplasmic reticulum-lipid droplets (ER-LD) contacts (By similarity). Also required for maintaining endoplasmic reticulum structure (By similarity). Plays a role in apical endocytosis/recycling (By similarity). Plays a key role in eye and brain development and neurodegeneration (By similarity).</text>
</comment>
<comment type="catalytic activity">
    <reaction evidence="4">
        <text>GTP + H2O = GDP + phosphate + H(+)</text>
        <dbReference type="Rhea" id="RHEA:19669"/>
        <dbReference type="ChEBI" id="CHEBI:15377"/>
        <dbReference type="ChEBI" id="CHEBI:15378"/>
        <dbReference type="ChEBI" id="CHEBI:37565"/>
        <dbReference type="ChEBI" id="CHEBI:43474"/>
        <dbReference type="ChEBI" id="CHEBI:58189"/>
        <dbReference type="EC" id="3.6.5.2"/>
    </reaction>
    <physiologicalReaction direction="left-to-right" evidence="4">
        <dbReference type="Rhea" id="RHEA:19670"/>
    </physiologicalReaction>
</comment>
<comment type="cofactor">
    <cofactor evidence="4">
        <name>Mg(2+)</name>
        <dbReference type="ChEBI" id="CHEBI:18420"/>
    </cofactor>
</comment>
<comment type="activity regulation">
    <text evidence="4">Regulated by guanine nucleotide exchange factors (GEFs) which promote the exchange of bound GDP for free GTP. Regulated by GTPase activating proteins (GAPs) which increase the GTP hydrolysis activity at the ER membrane. Inhibited by GDP dissociation inhibitors (GDIs) which prevent Rab-GDP dissociation.</text>
</comment>
<comment type="subunit">
    <text evidence="4">Interacts (in GTP-bound form) with ZFYVE1 (By similarity). Interacts with ZW10 and this interaction is enhanced in the presence of ZFYVE1 (By similarity). Interacts with BSCL2 (By similarity).</text>
</comment>
<comment type="subcellular location">
    <subcellularLocation>
        <location evidence="4">Endoplasmic reticulum membrane</location>
    </subcellularLocation>
    <subcellularLocation>
        <location evidence="4">Golgi apparatus</location>
        <location evidence="4">cis-Golgi network membrane</location>
    </subcellularLocation>
    <subcellularLocation>
        <location evidence="4">Lipid droplet</location>
    </subcellularLocation>
    <subcellularLocation>
        <location evidence="2">Apical cell membrane</location>
    </subcellularLocation>
</comment>
<comment type="domain">
    <text evidence="3">Switch 1, switch 2 and the interswitch regions are characteristic of Rab GTPases and mediate the interactions with Rab downstream effectors. The switch regions undergo conformational changes upon nucleotide binding which drive interaction with specific sets of effector proteins, with most effectors only binding to GTP-bound Rab.</text>
</comment>
<comment type="similarity">
    <text evidence="6">Belongs to the small GTPase superfamily. Rab family.</text>
</comment>